<evidence type="ECO:0000250" key="1">
    <source>
        <dbReference type="UniProtKB" id="O85465"/>
    </source>
</evidence>
<evidence type="ECO:0000255" key="2">
    <source>
        <dbReference type="PROSITE-ProRule" id="PRU00513"/>
    </source>
</evidence>
<evidence type="ECO:0000256" key="3">
    <source>
        <dbReference type="SAM" id="MobiDB-lite"/>
    </source>
</evidence>
<evidence type="ECO:0000305" key="4"/>
<protein>
    <recommendedName>
        <fullName>Endoglucanase</fullName>
        <ecNumber>3.2.1.4</ecNumber>
    </recommendedName>
    <alternativeName>
        <fullName>Cellulase</fullName>
    </alternativeName>
    <alternativeName>
        <fullName>Endo-1,4-beta-glucanase</fullName>
    </alternativeName>
</protein>
<feature type="signal peptide">
    <location>
        <begin position="1"/>
        <end position="29"/>
    </location>
</feature>
<feature type="chain" id="PRO_0000007839" description="Endoglucanase">
    <location>
        <begin position="30"/>
        <end position="499"/>
    </location>
</feature>
<feature type="domain" description="CBM3" evidence="2">
    <location>
        <begin position="350"/>
        <end position="499"/>
    </location>
</feature>
<feature type="region of interest" description="Disordered" evidence="3">
    <location>
        <begin position="330"/>
        <end position="353"/>
    </location>
</feature>
<feature type="compositionally biased region" description="Basic and acidic residues" evidence="3">
    <location>
        <begin position="330"/>
        <end position="340"/>
    </location>
</feature>
<feature type="active site" description="Proton donor" evidence="1">
    <location>
        <position position="169"/>
    </location>
</feature>
<feature type="active site" description="Nucleophile" evidence="1">
    <location>
        <position position="257"/>
    </location>
</feature>
<feature type="binding site" evidence="1">
    <location>
        <position position="65"/>
    </location>
    <ligand>
        <name>substrate</name>
    </ligand>
</feature>
<feature type="binding site" evidence="1">
    <location>
        <begin position="69"/>
        <end position="70"/>
    </location>
    <ligand>
        <name>substrate</name>
    </ligand>
</feature>
<feature type="binding site" evidence="1">
    <location>
        <position position="96"/>
    </location>
    <ligand>
        <name>substrate</name>
    </ligand>
</feature>
<feature type="binding site" evidence="1">
    <location>
        <position position="131"/>
    </location>
    <ligand>
        <name>substrate</name>
    </ligand>
</feature>
<feature type="binding site" evidence="1">
    <location>
        <position position="231"/>
    </location>
    <ligand>
        <name>substrate</name>
    </ligand>
</feature>
<feature type="binding site" evidence="1">
    <location>
        <begin position="263"/>
        <end position="264"/>
    </location>
    <ligand>
        <name>substrate</name>
    </ligand>
</feature>
<feature type="binding site" evidence="1">
    <location>
        <position position="291"/>
    </location>
    <ligand>
        <name>substrate</name>
    </ligand>
</feature>
<feature type="binding site" evidence="1">
    <location>
        <begin position="296"/>
        <end position="298"/>
    </location>
    <ligand>
        <name>substrate</name>
    </ligand>
</feature>
<organism>
    <name type="scientific">Bacillus subtilis</name>
    <dbReference type="NCBI Taxonomy" id="1423"/>
    <lineage>
        <taxon>Bacteria</taxon>
        <taxon>Bacillati</taxon>
        <taxon>Bacillota</taxon>
        <taxon>Bacilli</taxon>
        <taxon>Bacillales</taxon>
        <taxon>Bacillaceae</taxon>
        <taxon>Bacillus</taxon>
    </lineage>
</organism>
<dbReference type="EC" id="3.2.1.4"/>
<dbReference type="EMBL" id="M16185">
    <property type="protein sequence ID" value="AAA22496.1"/>
    <property type="status" value="ALT_INIT"/>
    <property type="molecule type" value="Genomic_DNA"/>
</dbReference>
<dbReference type="PIR" id="A26874">
    <property type="entry name" value="A26874"/>
</dbReference>
<dbReference type="SMR" id="P07983"/>
<dbReference type="STRING" id="483913.AN935_09445"/>
<dbReference type="CAZy" id="CBM3">
    <property type="family name" value="Carbohydrate-Binding Module Family 3"/>
</dbReference>
<dbReference type="CAZy" id="GH5">
    <property type="family name" value="Glycoside Hydrolase Family 5"/>
</dbReference>
<dbReference type="GO" id="GO:0008810">
    <property type="term" value="F:cellulase activity"/>
    <property type="evidence" value="ECO:0007669"/>
    <property type="project" value="UniProtKB-EC"/>
</dbReference>
<dbReference type="GO" id="GO:0030248">
    <property type="term" value="F:cellulose binding"/>
    <property type="evidence" value="ECO:0007669"/>
    <property type="project" value="InterPro"/>
</dbReference>
<dbReference type="GO" id="GO:0030245">
    <property type="term" value="P:cellulose catabolic process"/>
    <property type="evidence" value="ECO:0007669"/>
    <property type="project" value="UniProtKB-KW"/>
</dbReference>
<dbReference type="Gene3D" id="2.60.40.710">
    <property type="entry name" value="Endoglucanase-like"/>
    <property type="match status" value="1"/>
</dbReference>
<dbReference type="Gene3D" id="3.20.20.80">
    <property type="entry name" value="Glycosidases"/>
    <property type="match status" value="1"/>
</dbReference>
<dbReference type="InterPro" id="IPR008965">
    <property type="entry name" value="CBM2/CBM3_carb-bd_dom_sf"/>
</dbReference>
<dbReference type="InterPro" id="IPR001956">
    <property type="entry name" value="CBM3"/>
</dbReference>
<dbReference type="InterPro" id="IPR036966">
    <property type="entry name" value="CBM3_sf"/>
</dbReference>
<dbReference type="InterPro" id="IPR001547">
    <property type="entry name" value="Glyco_hydro_5"/>
</dbReference>
<dbReference type="InterPro" id="IPR018087">
    <property type="entry name" value="Glyco_hydro_5_CS"/>
</dbReference>
<dbReference type="InterPro" id="IPR017853">
    <property type="entry name" value="Glycoside_hydrolase_SF"/>
</dbReference>
<dbReference type="PANTHER" id="PTHR34142">
    <property type="entry name" value="ENDO-BETA-1,4-GLUCANASE A"/>
    <property type="match status" value="1"/>
</dbReference>
<dbReference type="PANTHER" id="PTHR34142:SF1">
    <property type="entry name" value="GLYCOSIDE HYDROLASE FAMILY 5 DOMAIN-CONTAINING PROTEIN"/>
    <property type="match status" value="1"/>
</dbReference>
<dbReference type="Pfam" id="PF00942">
    <property type="entry name" value="CBM_3"/>
    <property type="match status" value="1"/>
</dbReference>
<dbReference type="Pfam" id="PF00150">
    <property type="entry name" value="Cellulase"/>
    <property type="match status" value="1"/>
</dbReference>
<dbReference type="SMART" id="SM01067">
    <property type="entry name" value="CBM_3"/>
    <property type="match status" value="1"/>
</dbReference>
<dbReference type="SUPFAM" id="SSF51445">
    <property type="entry name" value="(Trans)glycosidases"/>
    <property type="match status" value="1"/>
</dbReference>
<dbReference type="SUPFAM" id="SSF49384">
    <property type="entry name" value="Carbohydrate-binding domain"/>
    <property type="match status" value="1"/>
</dbReference>
<dbReference type="PROSITE" id="PS51172">
    <property type="entry name" value="CBM3"/>
    <property type="match status" value="1"/>
</dbReference>
<dbReference type="PROSITE" id="PS00659">
    <property type="entry name" value="GLYCOSYL_HYDROL_F5"/>
    <property type="match status" value="1"/>
</dbReference>
<comment type="catalytic activity">
    <reaction>
        <text>Endohydrolysis of (1-&gt;4)-beta-D-glucosidic linkages in cellulose, lichenin and cereal beta-D-glucans.</text>
        <dbReference type="EC" id="3.2.1.4"/>
    </reaction>
</comment>
<comment type="similarity">
    <text evidence="4">Belongs to the glycosyl hydrolase 5 (cellulase A) family.</text>
</comment>
<comment type="sequence caution" evidence="4">
    <conflict type="erroneous initiation">
        <sequence resource="EMBL-CDS" id="AAA22496"/>
    </conflict>
</comment>
<accession>P07983</accession>
<gene>
    <name type="primary">bglC</name>
    <name type="synonym">gld</name>
</gene>
<keyword id="KW-0119">Carbohydrate metabolism</keyword>
<keyword id="KW-0136">Cellulose degradation</keyword>
<keyword id="KW-0326">Glycosidase</keyword>
<keyword id="KW-0378">Hydrolase</keyword>
<keyword id="KW-0624">Polysaccharide degradation</keyword>
<keyword id="KW-0732">Signal</keyword>
<name>GUN1_BACIU</name>
<reference key="1">
    <citation type="journal article" date="1987" name="J. Bacteriol.">
        <title>Endo-beta-1,4-glucanase gene of Bacillus subtilis DLG.</title>
        <authorList>
            <person name="Robson L.M."/>
            <person name="Chambliss G.H."/>
        </authorList>
    </citation>
    <scope>NUCLEOTIDE SEQUENCE [GENOMIC DNA]</scope>
    <source>
        <strain>DLG</strain>
    </source>
</reference>
<proteinExistence type="inferred from homology"/>
<sequence length="499" mass="55187">MKRSISIFITCLLIAVLTMGGLLPSPASAAGTKTPVAKNGQLSIKGTQLVNRDGKAVQLKGISSHGLQWYGDFVNKDSLKWLRDDWGITVFRAAMYTADGGYIDNPSVKNKVKEAVEAAKELGIYVIIDWHILNDGNPNQNKEKAKEFFKEMSSLYGNTPNVIYEIANEPNGDVNWKRDIKPYAEEVISVIRKNDPDNIIIVGTGTWSQDVNDAADDQLKDANVMYALHFYAGTHGQSLRDKANYALSKGAPIFVTEWGTSDASGNGGVFLDQSREWLNYLDSKNISWVNWNLSDKQESSSALKPGASKTGGWPLTDLTASGTFVRENIRGTKDSTKDVPETPAQDNPTQEKGVSVQYKAGDGRVNSNQIRPQLHIKNNGNATVDLKDVTARYWYNVKNKGQNFDCDYAQMGCGNLTHKFVTLHKPKQGADTYLELGFKTGTLSPGASTGNIQLRLHNDDWSNYAQSGDYSFFQSNTFKTTKKITLYHQGKLIWGTEPN</sequence>